<dbReference type="EMBL" id="AAFI02000003">
    <property type="protein sequence ID" value="EAL73460.1"/>
    <property type="molecule type" value="Genomic_DNA"/>
</dbReference>
<dbReference type="RefSeq" id="XP_647492.1">
    <property type="nucleotide sequence ID" value="XM_642400.1"/>
</dbReference>
<dbReference type="FunCoup" id="Q55FP1">
    <property type="interactions" value="440"/>
</dbReference>
<dbReference type="STRING" id="44689.Q55FP1"/>
<dbReference type="PaxDb" id="44689-DDB0231031"/>
<dbReference type="EnsemblProtists" id="EAL73460">
    <property type="protein sequence ID" value="EAL73460"/>
    <property type="gene ID" value="DDB_G0268014"/>
</dbReference>
<dbReference type="GeneID" id="8616299"/>
<dbReference type="KEGG" id="ddi:DDB_G0268014"/>
<dbReference type="dictyBase" id="DDB_G0268014">
    <property type="gene designation" value="gtf2h1"/>
</dbReference>
<dbReference type="VEuPathDB" id="AmoebaDB:DDB_G0268014"/>
<dbReference type="eggNOG" id="KOG2074">
    <property type="taxonomic scope" value="Eukaryota"/>
</dbReference>
<dbReference type="HOGENOM" id="CLU_017639_3_0_1"/>
<dbReference type="InParanoid" id="Q55FP1"/>
<dbReference type="OMA" id="VCTCELL"/>
<dbReference type="PhylomeDB" id="Q55FP1"/>
<dbReference type="Reactome" id="R-DDI-113418">
    <property type="pathway name" value="Formation of the Early Elongation Complex"/>
</dbReference>
<dbReference type="Reactome" id="R-DDI-5696395">
    <property type="pathway name" value="Formation of Incision Complex in GG-NER"/>
</dbReference>
<dbReference type="Reactome" id="R-DDI-674695">
    <property type="pathway name" value="RNA Polymerase II Pre-transcription Events"/>
</dbReference>
<dbReference type="Reactome" id="R-DDI-6781823">
    <property type="pathway name" value="Formation of TC-NER Pre-Incision Complex"/>
</dbReference>
<dbReference type="Reactome" id="R-DDI-6782135">
    <property type="pathway name" value="Dual incision in TC-NER"/>
</dbReference>
<dbReference type="Reactome" id="R-DDI-6782210">
    <property type="pathway name" value="Gap-filling DNA repair synthesis and ligation in TC-NER"/>
</dbReference>
<dbReference type="Reactome" id="R-DDI-6796648">
    <property type="pathway name" value="TP53 Regulates Transcription of DNA Repair Genes"/>
</dbReference>
<dbReference type="Reactome" id="R-DDI-72086">
    <property type="pathway name" value="mRNA Capping"/>
</dbReference>
<dbReference type="Reactome" id="R-DDI-73772">
    <property type="pathway name" value="RNA Polymerase I Promoter Escape"/>
</dbReference>
<dbReference type="Reactome" id="R-DDI-73776">
    <property type="pathway name" value="RNA Polymerase II Promoter Escape"/>
</dbReference>
<dbReference type="Reactome" id="R-DDI-73779">
    <property type="pathway name" value="RNA Polymerase II Transcription Pre-Initiation And Promoter Opening"/>
</dbReference>
<dbReference type="Reactome" id="R-DDI-75953">
    <property type="pathway name" value="RNA Polymerase II Transcription Initiation"/>
</dbReference>
<dbReference type="Reactome" id="R-DDI-76042">
    <property type="pathway name" value="RNA Polymerase II Transcription Initiation And Promoter Clearance"/>
</dbReference>
<dbReference type="Reactome" id="R-DDI-77075">
    <property type="pathway name" value="RNA Pol II CTD phosphorylation and interaction with CE"/>
</dbReference>
<dbReference type="PRO" id="PR:Q55FP1"/>
<dbReference type="Proteomes" id="UP000002195">
    <property type="component" value="Chromosome 1"/>
</dbReference>
<dbReference type="GO" id="GO:0000112">
    <property type="term" value="C:nucleotide-excision repair factor 3 complex"/>
    <property type="evidence" value="ECO:0000250"/>
    <property type="project" value="dictyBase"/>
</dbReference>
<dbReference type="GO" id="GO:0000439">
    <property type="term" value="C:transcription factor TFIIH core complex"/>
    <property type="evidence" value="ECO:0000318"/>
    <property type="project" value="GO_Central"/>
</dbReference>
<dbReference type="GO" id="GO:0005675">
    <property type="term" value="C:transcription factor TFIIH holo complex"/>
    <property type="evidence" value="ECO:0000250"/>
    <property type="project" value="dictyBase"/>
</dbReference>
<dbReference type="GO" id="GO:0006281">
    <property type="term" value="P:DNA repair"/>
    <property type="evidence" value="ECO:0000318"/>
    <property type="project" value="GO_Central"/>
</dbReference>
<dbReference type="GO" id="GO:0006289">
    <property type="term" value="P:nucleotide-excision repair"/>
    <property type="evidence" value="ECO:0000250"/>
    <property type="project" value="dictyBase"/>
</dbReference>
<dbReference type="GO" id="GO:0006360">
    <property type="term" value="P:transcription by RNA polymerase I"/>
    <property type="evidence" value="ECO:0000318"/>
    <property type="project" value="GO_Central"/>
</dbReference>
<dbReference type="GO" id="GO:0006366">
    <property type="term" value="P:transcription by RNA polymerase II"/>
    <property type="evidence" value="ECO:0000318"/>
    <property type="project" value="GO_Central"/>
</dbReference>
<dbReference type="CDD" id="cd13229">
    <property type="entry name" value="PH_TFIIH"/>
    <property type="match status" value="1"/>
</dbReference>
<dbReference type="FunFam" id="2.30.29.30:FF:000946">
    <property type="entry name" value="General transcription factor IIH subunit 1"/>
    <property type="match status" value="1"/>
</dbReference>
<dbReference type="Gene3D" id="6.10.140.1200">
    <property type="match status" value="1"/>
</dbReference>
<dbReference type="Gene3D" id="2.30.29.30">
    <property type="entry name" value="Pleckstrin-homology domain (PH domain)/Phosphotyrosine-binding domain (PTB)"/>
    <property type="match status" value="1"/>
</dbReference>
<dbReference type="InterPro" id="IPR005607">
    <property type="entry name" value="BSD_dom"/>
</dbReference>
<dbReference type="InterPro" id="IPR035925">
    <property type="entry name" value="BSD_dom_sf"/>
</dbReference>
<dbReference type="InterPro" id="IPR011993">
    <property type="entry name" value="PH-like_dom_sf"/>
</dbReference>
<dbReference type="InterPro" id="IPR027079">
    <property type="entry name" value="Tfb1/GTF2H1"/>
</dbReference>
<dbReference type="InterPro" id="IPR013876">
    <property type="entry name" value="TFIIH_BTF_p62_N"/>
</dbReference>
<dbReference type="PANTHER" id="PTHR12856">
    <property type="entry name" value="TRANSCRIPTION INITIATION FACTOR IIH-RELATED"/>
    <property type="match status" value="1"/>
</dbReference>
<dbReference type="Pfam" id="PF03909">
    <property type="entry name" value="BSD"/>
    <property type="match status" value="1"/>
</dbReference>
<dbReference type="Pfam" id="PF08567">
    <property type="entry name" value="PH_TFIIH"/>
    <property type="match status" value="1"/>
</dbReference>
<dbReference type="SMART" id="SM00751">
    <property type="entry name" value="BSD"/>
    <property type="match status" value="2"/>
</dbReference>
<dbReference type="SUPFAM" id="SSF140383">
    <property type="entry name" value="BSD domain-like"/>
    <property type="match status" value="2"/>
</dbReference>
<dbReference type="SUPFAM" id="SSF50729">
    <property type="entry name" value="PH domain-like"/>
    <property type="match status" value="1"/>
</dbReference>
<dbReference type="PROSITE" id="PS50858">
    <property type="entry name" value="BSD"/>
    <property type="match status" value="2"/>
</dbReference>
<organism>
    <name type="scientific">Dictyostelium discoideum</name>
    <name type="common">Social amoeba</name>
    <dbReference type="NCBI Taxonomy" id="44689"/>
    <lineage>
        <taxon>Eukaryota</taxon>
        <taxon>Amoebozoa</taxon>
        <taxon>Evosea</taxon>
        <taxon>Eumycetozoa</taxon>
        <taxon>Dictyostelia</taxon>
        <taxon>Dictyosteliales</taxon>
        <taxon>Dictyosteliaceae</taxon>
        <taxon>Dictyostelium</taxon>
    </lineage>
</organism>
<sequence length="697" mass="79353">MNKFSREAGEVVLLRAITKYSSQQGTLFFTSLRLVWVQSGYSEPSLHLHISEIKNQFISTPKSAKALLRLSVRDSIKNALQEFVFEFTHPTNARSDLNSFRDKIAATANLTAPTLPVSASNGSNTTSPTNGTSPINGTSPTMTGLKVNPDGTITNDPLSSQPAQVEEKAETKYLSKLKQPSLSEQQIKQRVILLQSNKELRELYEQMVNKDRVISESDFWESRKSMLKNDSTRSEKQHTGMPSNLLADVRPSSETPNAVHYRFTPTVIHQIFIQHPSVEKAYKANVPLKISEQNFWKKYVQSKYFYRDRSSANAPPVDDDLFSKYETDEQNKIRILKRKLIDINPLVDLSSTDGFDTDVHSGYGVLLDQSQDPNKLEKALPLLRKFNRHSALVLGSKDLLTNNSINIEKDQKNLKKTKKDENSTSTPTTTTTTTNTTNTTNTTTTTTTNNTTIKDPNLYNGDDEENISVEQMEKILENHKKLVNQHIIIDDLQEENSQTLTLLKISDQKRYFEGHSTNNILSDKEKSQLIDILDFDYKNWQPNLPQVFYQTHSSSSILQEPNISVHSEIFEPYNKAAINSKEEYNLPESSFKRDLFQSFHHCNELLRHFWATTFTLGRGAPPTSQQIDKNNKISSAIALQYDKIEEKKKMLISQNKVNQSSLFTPILESLHKAIEKKESQTNQYTFKNNNNNFHTIS</sequence>
<protein>
    <recommendedName>
        <fullName>General transcription factor IIH subunit 1</fullName>
    </recommendedName>
    <alternativeName>
        <fullName>TFIIH basal transcription factor complex subunit 1</fullName>
    </alternativeName>
</protein>
<reference key="1">
    <citation type="journal article" date="2005" name="Nature">
        <title>The genome of the social amoeba Dictyostelium discoideum.</title>
        <authorList>
            <person name="Eichinger L."/>
            <person name="Pachebat J.A."/>
            <person name="Gloeckner G."/>
            <person name="Rajandream M.A."/>
            <person name="Sucgang R."/>
            <person name="Berriman M."/>
            <person name="Song J."/>
            <person name="Olsen R."/>
            <person name="Szafranski K."/>
            <person name="Xu Q."/>
            <person name="Tunggal B."/>
            <person name="Kummerfeld S."/>
            <person name="Madera M."/>
            <person name="Konfortov B.A."/>
            <person name="Rivero F."/>
            <person name="Bankier A.T."/>
            <person name="Lehmann R."/>
            <person name="Hamlin N."/>
            <person name="Davies R."/>
            <person name="Gaudet P."/>
            <person name="Fey P."/>
            <person name="Pilcher K."/>
            <person name="Chen G."/>
            <person name="Saunders D."/>
            <person name="Sodergren E.J."/>
            <person name="Davis P."/>
            <person name="Kerhornou A."/>
            <person name="Nie X."/>
            <person name="Hall N."/>
            <person name="Anjard C."/>
            <person name="Hemphill L."/>
            <person name="Bason N."/>
            <person name="Farbrother P."/>
            <person name="Desany B."/>
            <person name="Just E."/>
            <person name="Morio T."/>
            <person name="Rost R."/>
            <person name="Churcher C.M."/>
            <person name="Cooper J."/>
            <person name="Haydock S."/>
            <person name="van Driessche N."/>
            <person name="Cronin A."/>
            <person name="Goodhead I."/>
            <person name="Muzny D.M."/>
            <person name="Mourier T."/>
            <person name="Pain A."/>
            <person name="Lu M."/>
            <person name="Harper D."/>
            <person name="Lindsay R."/>
            <person name="Hauser H."/>
            <person name="James K.D."/>
            <person name="Quiles M."/>
            <person name="Madan Babu M."/>
            <person name="Saito T."/>
            <person name="Buchrieser C."/>
            <person name="Wardroper A."/>
            <person name="Felder M."/>
            <person name="Thangavelu M."/>
            <person name="Johnson D."/>
            <person name="Knights A."/>
            <person name="Loulseged H."/>
            <person name="Mungall K.L."/>
            <person name="Oliver K."/>
            <person name="Price C."/>
            <person name="Quail M.A."/>
            <person name="Urushihara H."/>
            <person name="Hernandez J."/>
            <person name="Rabbinowitsch E."/>
            <person name="Steffen D."/>
            <person name="Sanders M."/>
            <person name="Ma J."/>
            <person name="Kohara Y."/>
            <person name="Sharp S."/>
            <person name="Simmonds M.N."/>
            <person name="Spiegler S."/>
            <person name="Tivey A."/>
            <person name="Sugano S."/>
            <person name="White B."/>
            <person name="Walker D."/>
            <person name="Woodward J.R."/>
            <person name="Winckler T."/>
            <person name="Tanaka Y."/>
            <person name="Shaulsky G."/>
            <person name="Schleicher M."/>
            <person name="Weinstock G.M."/>
            <person name="Rosenthal A."/>
            <person name="Cox E.C."/>
            <person name="Chisholm R.L."/>
            <person name="Gibbs R.A."/>
            <person name="Loomis W.F."/>
            <person name="Platzer M."/>
            <person name="Kay R.R."/>
            <person name="Williams J.G."/>
            <person name="Dear P.H."/>
            <person name="Noegel A.A."/>
            <person name="Barrell B.G."/>
            <person name="Kuspa A."/>
        </authorList>
    </citation>
    <scope>NUCLEOTIDE SEQUENCE [LARGE SCALE GENOMIC DNA]</scope>
    <source>
        <strain>AX4</strain>
    </source>
</reference>
<name>TF2H1_DICDI</name>
<evidence type="ECO:0000250" key="1"/>
<evidence type="ECO:0000250" key="2">
    <source>
        <dbReference type="UniProtKB" id="P32780"/>
    </source>
</evidence>
<evidence type="ECO:0000255" key="3">
    <source>
        <dbReference type="PROSITE-ProRule" id="PRU00036"/>
    </source>
</evidence>
<evidence type="ECO:0000256" key="4">
    <source>
        <dbReference type="SAM" id="MobiDB-lite"/>
    </source>
</evidence>
<evidence type="ECO:0000305" key="5"/>
<feature type="chain" id="PRO_0000329319" description="General transcription factor IIH subunit 1">
    <location>
        <begin position="1"/>
        <end position="697"/>
    </location>
</feature>
<feature type="domain" description="BSD 1" evidence="3">
    <location>
        <begin position="174"/>
        <end position="231"/>
    </location>
</feature>
<feature type="domain" description="BSD 2" evidence="3">
    <location>
        <begin position="255"/>
        <end position="307"/>
    </location>
</feature>
<feature type="region of interest" description="Disordered" evidence="4">
    <location>
        <begin position="115"/>
        <end position="141"/>
    </location>
</feature>
<feature type="region of interest" description="Disordered" evidence="4">
    <location>
        <begin position="228"/>
        <end position="250"/>
    </location>
</feature>
<feature type="region of interest" description="Disordered" evidence="4">
    <location>
        <begin position="412"/>
        <end position="462"/>
    </location>
</feature>
<feature type="compositionally biased region" description="Low complexity" evidence="4">
    <location>
        <begin position="115"/>
        <end position="136"/>
    </location>
</feature>
<feature type="compositionally biased region" description="Basic and acidic residues" evidence="4">
    <location>
        <begin position="412"/>
        <end position="422"/>
    </location>
</feature>
<feature type="compositionally biased region" description="Low complexity" evidence="4">
    <location>
        <begin position="423"/>
        <end position="452"/>
    </location>
</feature>
<keyword id="KW-0227">DNA damage</keyword>
<keyword id="KW-0234">DNA repair</keyword>
<keyword id="KW-0539">Nucleus</keyword>
<keyword id="KW-1185">Reference proteome</keyword>
<keyword id="KW-0677">Repeat</keyword>
<keyword id="KW-0804">Transcription</keyword>
<keyword id="KW-0805">Transcription regulation</keyword>
<proteinExistence type="inferred from homology"/>
<accession>Q55FP1</accession>
<comment type="function">
    <text evidence="2">Component of the general transcription and DNA repair factor IIH (TFIIH) core complex, which is involved in general and transcription-coupled nucleotide excision repair (NER) of damaged DNA and, when complexed to CAK, in RNA transcription by RNA polymerase II. In NER, TFIIH acts by opening DNA around the lesion to allow the excision of the damaged oligonucleotide and its replacement by a new DNA fragment. In transcription, TFIIH has an essential role in transcription initiation. When the pre-initiation complex (PIC) has been established, TFIIH is required for promoter opening and promoter escape. Phosphorylation of the C-terminal tail (CTD) of the largest subunit of RNA polymerase II by the kinase module CAK controls the initiation of transcription.</text>
</comment>
<comment type="subunit">
    <text evidence="2">Component of the 7-subunit TFIIH core complex composed of XPB/repB, XPD/repD, gtf2h1, gtf2h2, gtf2h3, gtf2h4 and gtf2h5, which is active in NER. The core complex associates with the 3-subunit CDK-activating kinase (CAK) module composed of cycH/cyclin H, cdk7 and mnat1 to form the 10-subunit holoenzyme (holo-TFIIH) active in transcription.</text>
</comment>
<comment type="subcellular location">
    <subcellularLocation>
        <location evidence="1">Nucleus</location>
    </subcellularLocation>
</comment>
<comment type="similarity">
    <text evidence="5">Belongs to the TFB1 family.</text>
</comment>
<gene>
    <name type="primary">gtf2h1</name>
    <name type="synonym">tfiih1</name>
    <name type="ORF">DDB_G0268014</name>
</gene>